<organism>
    <name type="scientific">Influenza A virus (strain A/Goose/Guangxi/345/2005 H5N1 genotype G)</name>
    <dbReference type="NCBI Taxonomy" id="365089"/>
    <lineage>
        <taxon>Viruses</taxon>
        <taxon>Riboviria</taxon>
        <taxon>Orthornavirae</taxon>
        <taxon>Negarnaviricota</taxon>
        <taxon>Polyploviricotina</taxon>
        <taxon>Insthoviricetes</taxon>
        <taxon>Articulavirales</taxon>
        <taxon>Orthomyxoviridae</taxon>
        <taxon>Alphainfluenzavirus</taxon>
        <taxon>Alphainfluenzavirus influenzae</taxon>
        <taxon>Influenza A virus</taxon>
    </lineage>
</organism>
<gene>
    <name evidence="1" type="primary">PB2</name>
</gene>
<accession>Q2LG86</accession>
<protein>
    <recommendedName>
        <fullName evidence="1">Polymerase basic protein 2</fullName>
    </recommendedName>
    <alternativeName>
        <fullName evidence="1">RNA-directed RNA polymerase subunit P3</fullName>
    </alternativeName>
</protein>
<dbReference type="EMBL" id="DQ320830">
    <property type="protein sequence ID" value="ABC66472.1"/>
    <property type="molecule type" value="Genomic_RNA"/>
</dbReference>
<dbReference type="SMR" id="Q2LG86"/>
<dbReference type="GO" id="GO:0042025">
    <property type="term" value="C:host cell nucleus"/>
    <property type="evidence" value="ECO:0007669"/>
    <property type="project" value="UniProtKB-SubCell"/>
</dbReference>
<dbReference type="GO" id="GO:0044423">
    <property type="term" value="C:virion component"/>
    <property type="evidence" value="ECO:0007669"/>
    <property type="project" value="UniProtKB-UniRule"/>
</dbReference>
<dbReference type="GO" id="GO:0003723">
    <property type="term" value="F:RNA binding"/>
    <property type="evidence" value="ECO:0007669"/>
    <property type="project" value="UniProtKB-UniRule"/>
</dbReference>
<dbReference type="GO" id="GO:0003968">
    <property type="term" value="F:RNA-directed RNA polymerase activity"/>
    <property type="evidence" value="ECO:0007669"/>
    <property type="project" value="UniProtKB-UniRule"/>
</dbReference>
<dbReference type="GO" id="GO:0006370">
    <property type="term" value="P:7-methylguanosine mRNA capping"/>
    <property type="evidence" value="ECO:0007669"/>
    <property type="project" value="UniProtKB-UniRule"/>
</dbReference>
<dbReference type="GO" id="GO:0075526">
    <property type="term" value="P:cap snatching"/>
    <property type="evidence" value="ECO:0007669"/>
    <property type="project" value="UniProtKB-UniRule"/>
</dbReference>
<dbReference type="GO" id="GO:0006351">
    <property type="term" value="P:DNA-templated transcription"/>
    <property type="evidence" value="ECO:0007669"/>
    <property type="project" value="UniProtKB-UniRule"/>
</dbReference>
<dbReference type="GO" id="GO:0039657">
    <property type="term" value="P:symbiont-mediated suppression of host gene expression"/>
    <property type="evidence" value="ECO:0007669"/>
    <property type="project" value="UniProtKB-KW"/>
</dbReference>
<dbReference type="GO" id="GO:0039523">
    <property type="term" value="P:symbiont-mediated suppression of host mRNA transcription via inhibition of RNA polymerase II activity"/>
    <property type="evidence" value="ECO:0007669"/>
    <property type="project" value="UniProtKB-UniRule"/>
</dbReference>
<dbReference type="GO" id="GO:0039694">
    <property type="term" value="P:viral RNA genome replication"/>
    <property type="evidence" value="ECO:0007669"/>
    <property type="project" value="InterPro"/>
</dbReference>
<dbReference type="FunFam" id="3.30.30.90:FF:000001">
    <property type="entry name" value="Polymerase basic protein 2"/>
    <property type="match status" value="1"/>
</dbReference>
<dbReference type="Gene3D" id="3.30.30.90">
    <property type="entry name" value="Polymerase Basic Protein 2, C-terminal domain"/>
    <property type="match status" value="1"/>
</dbReference>
<dbReference type="HAMAP" id="MF_04062">
    <property type="entry name" value="INV_PB2"/>
    <property type="match status" value="1"/>
</dbReference>
<dbReference type="InterPro" id="IPR049110">
    <property type="entry name" value="Flu_PB2_2nd"/>
</dbReference>
<dbReference type="InterPro" id="IPR049114">
    <property type="entry name" value="Flu_PB2_6th"/>
</dbReference>
<dbReference type="InterPro" id="IPR049115">
    <property type="entry name" value="Flu_PB2_C"/>
</dbReference>
<dbReference type="InterPro" id="IPR048298">
    <property type="entry name" value="Flu_PB2_CAP-bd"/>
</dbReference>
<dbReference type="InterPro" id="IPR049111">
    <property type="entry name" value="Flu_PB2_middle"/>
</dbReference>
<dbReference type="InterPro" id="IPR049106">
    <property type="entry name" value="Flu_PB2_N"/>
</dbReference>
<dbReference type="InterPro" id="IPR001591">
    <property type="entry name" value="INV_PB2"/>
</dbReference>
<dbReference type="InterPro" id="IPR049113">
    <property type="entry name" value="PB2_helical"/>
</dbReference>
<dbReference type="InterPro" id="IPR037258">
    <property type="entry name" value="PDB2_C"/>
</dbReference>
<dbReference type="Pfam" id="PF20947">
    <property type="entry name" value="Flu_PB2_1st"/>
    <property type="match status" value="1"/>
</dbReference>
<dbReference type="Pfam" id="PF20948">
    <property type="entry name" value="Flu_PB2_2nd"/>
    <property type="match status" value="1"/>
</dbReference>
<dbReference type="Pfam" id="PF20949">
    <property type="entry name" value="Flu_PB2_3rd"/>
    <property type="match status" value="1"/>
</dbReference>
<dbReference type="Pfam" id="PF20950">
    <property type="entry name" value="Flu_PB2_4th"/>
    <property type="match status" value="1"/>
</dbReference>
<dbReference type="Pfam" id="PF00604">
    <property type="entry name" value="Flu_PB2_5th"/>
    <property type="match status" value="1"/>
</dbReference>
<dbReference type="Pfam" id="PF20951">
    <property type="entry name" value="Flu_PB2_6th"/>
    <property type="match status" value="1"/>
</dbReference>
<dbReference type="Pfam" id="PF20952">
    <property type="entry name" value="Flu_PB2_7th"/>
    <property type="match status" value="1"/>
</dbReference>
<dbReference type="SUPFAM" id="SSF160453">
    <property type="entry name" value="PB2 C-terminal domain-like"/>
    <property type="match status" value="1"/>
</dbReference>
<proteinExistence type="inferred from homology"/>
<keyword id="KW-1157">Cap snatching</keyword>
<keyword id="KW-1262">Eukaryotic host gene expression shutoff by virus</keyword>
<keyword id="KW-1191">Eukaryotic host transcription shutoff by virus</keyword>
<keyword id="KW-1190">Host gene expression shutoff by virus</keyword>
<keyword id="KW-1048">Host nucleus</keyword>
<keyword id="KW-0945">Host-virus interaction</keyword>
<keyword id="KW-1104">Inhibition of host RNA polymerase II by virus</keyword>
<keyword id="KW-0506">mRNA capping</keyword>
<keyword id="KW-0507">mRNA processing</keyword>
<keyword id="KW-1195">Viral transcription</keyword>
<keyword id="KW-0946">Virion</keyword>
<reference key="1">
    <citation type="journal article" date="2006" name="Proc. Natl. Acad. Sci. U.S.A.">
        <title>Emergence and predominance of an H5N1 influenza variant in China.</title>
        <authorList>
            <person name="Smith G.J."/>
            <person name="Fan X.H."/>
            <person name="Wang J."/>
            <person name="Li K.S."/>
            <person name="Qin K."/>
            <person name="Zhang J.X."/>
            <person name="Vijaykrishna D."/>
            <person name="Cheung C.L."/>
            <person name="Huang K."/>
            <person name="Rayner J.M."/>
            <person name="Peiris J.S."/>
            <person name="Chen H."/>
            <person name="Webster R.G."/>
            <person name="Guan Y."/>
        </authorList>
    </citation>
    <scope>NUCLEOTIDE SEQUENCE [GENOMIC RNA]</scope>
</reference>
<organismHost>
    <name type="scientific">Aves</name>
    <dbReference type="NCBI Taxonomy" id="8782"/>
</organismHost>
<organismHost>
    <name type="scientific">Felis catus</name>
    <name type="common">Cat</name>
    <name type="synonym">Felis silvestris catus</name>
    <dbReference type="NCBI Taxonomy" id="9685"/>
</organismHost>
<organismHost>
    <name type="scientific">Homo sapiens</name>
    <name type="common">Human</name>
    <dbReference type="NCBI Taxonomy" id="9606"/>
</organismHost>
<organismHost>
    <name type="scientific">Panthera pardus</name>
    <name type="common">Leopard</name>
    <name type="synonym">Felis pardus</name>
    <dbReference type="NCBI Taxonomy" id="9691"/>
</organismHost>
<organismHost>
    <name type="scientific">Panthera tigris</name>
    <name type="common">Tiger</name>
    <dbReference type="NCBI Taxonomy" id="9694"/>
</organismHost>
<organismHost>
    <name type="scientific">Sus scrofa</name>
    <name type="common">Pig</name>
    <dbReference type="NCBI Taxonomy" id="9823"/>
</organismHost>
<feature type="chain" id="PRO_0000311157" description="Polymerase basic protein 2">
    <location>
        <begin position="1"/>
        <end position="759"/>
    </location>
</feature>
<feature type="short sequence motif" description="Nuclear localization signal" evidence="1">
    <location>
        <begin position="736"/>
        <end position="739"/>
    </location>
</feature>
<feature type="site" description="Avian adaptation" evidence="1">
    <location>
        <position position="627"/>
    </location>
</feature>
<evidence type="ECO:0000255" key="1">
    <source>
        <dbReference type="HAMAP-Rule" id="MF_04062"/>
    </source>
</evidence>
<sequence>MERIKELRDLMSQSRTREILTKTTVDHMAIIKKYTSGRQEKNPALRMKWMMAMKYPITADKRIMEMIPERNEQGQTLWSKANDAGSDRVMVSPLAVTWWNRNGPTTSTVHYPKVYKTYFEKVERLKHGTFGPVHFRNQVKIRRRVDINPGHADLSAKEAQDVIMEVVFPNEVGARILTSESQLTITKEKKEELQDCKIAPLMVAYMLERELVRKTRFLPVAGGTSSVYIEVLHLTQGTCWEQMYTPGGRVTNDDVDHSLIIAARNIVRRAQVSADPLASLLEMCHSTQIGGIRMVDILRQNPTEEQAVDICKAAMGLRISSSFSFGGFTFKRTSGSSVKKEEEMLTGNLQTLKIKVHEGYEEFTMVGRRATAILRKATRRLIQLIVSGRDEQSIAEAIIVAMVFSQEDCMIKAVRGDLNFVNRANQRLNPMHQLLRHFQKDAKVLFQNWGIEPIDNVMGMIGILPDMTPSTEMSLRGVRVSKMGVDEYSSTERVVVSIDRFLRVRDQRGNVLLSPEEVSETQGTEKLTITYSSSMMWEINGPESVLVNTYQWIIRNWEAVKIQWSQDPTMLYNKMEFEPFQSLVPKAARGQYSGFVRTLFQQMRDVLGTFDTVQIIKLLPFAAAPPEQSRMQFSSLTVNVRGSGMRILVRGNSPVFNYNKATKRLTVLGKDAGALTEDPDEGTAGVESAVLRGFLILGKEDKRYGPALSINELSNIAKGEKANVLIGQGDVVLVMKRKRNSSILTDSQTATKRIRMAIN</sequence>
<comment type="function">
    <text evidence="1">Plays an essential role in transcription initiation and cap-stealing mechanism, in which cellular capped pre-mRNAs are used to generate primers for viral transcription. Recognizes and binds the 7-methylguanosine-containing cap of the target pre-RNA which is subsequently cleaved after 10-13 nucleotides by the viral protein PA. Plays a role in the initiation of the viral genome replication and modulates the activity of the ribonucleoprotein (RNP) complex.</text>
</comment>
<comment type="subunit">
    <text evidence="1">Influenza RNA polymerase is composed of three subunits: PB1, PB2 and PA. Interacts (via N-terminus) with PB1 (via C-terminus). Interacts with nucleoprotein NP (via N-terminus).</text>
</comment>
<comment type="subcellular location">
    <subcellularLocation>
        <location evidence="1">Virion</location>
    </subcellularLocation>
    <subcellularLocation>
        <location evidence="1">Host nucleus</location>
    </subcellularLocation>
</comment>
<comment type="similarity">
    <text evidence="1">Belongs to the influenza viruses PB2 family.</text>
</comment>
<name>PB2_I05A1</name>